<evidence type="ECO:0000255" key="1"/>
<evidence type="ECO:0000255" key="2">
    <source>
        <dbReference type="PROSITE-ProRule" id="PRU00448"/>
    </source>
</evidence>
<evidence type="ECO:0000269" key="3">
    <source>
    </source>
</evidence>
<evidence type="ECO:0000305" key="4"/>
<keyword id="KW-0106">Calcium</keyword>
<keyword id="KW-0903">Direct protein sequencing</keyword>
<keyword id="KW-0479">Metal-binding</keyword>
<keyword id="KW-0964">Secreted</keyword>
<keyword id="KW-0732">Signal</keyword>
<sequence length="224" mass="25132">MKVSLLLLALVLVCLVQGSESWRLRRTLRRIGRGIRRVGRVVKNVACNHACPRLCRQGVCKLACNLGCRGKRDVTQQLNQQGHVTPIPNSFAAYDMNEDGIISRKELALAIGEDIAHPDFMKAYSIADVDGDGELSPKEFYNGPYVFEMDLNDDDLAYCRYRLDIDDDLIDVIEGELVNQAPNFIEGNQVKETGKPHEIISKTGQPETKPIDKYVKLAEKTKTQ</sequence>
<accession>B3A0Q5</accession>
<organism>
    <name type="scientific">Lottia gigantea</name>
    <name type="common">Giant owl limpet</name>
    <dbReference type="NCBI Taxonomy" id="225164"/>
    <lineage>
        <taxon>Eukaryota</taxon>
        <taxon>Metazoa</taxon>
        <taxon>Spiralia</taxon>
        <taxon>Lophotrochozoa</taxon>
        <taxon>Mollusca</taxon>
        <taxon>Gastropoda</taxon>
        <taxon>Patellogastropoda</taxon>
        <taxon>Lottioidea</taxon>
        <taxon>Lottiidae</taxon>
        <taxon>Lottia</taxon>
    </lineage>
</organism>
<comment type="subcellular location">
    <subcellularLocation>
        <location evidence="3">Secreted</location>
    </subcellularLocation>
</comment>
<comment type="tissue specificity">
    <text evidence="3">Component of the acid-soluble organic matrix of calcified layers of the shell (at protein level).</text>
</comment>
<reference evidence="4" key="1">
    <citation type="submission" date="2007-12" db="EMBL/GenBank/DDBJ databases">
        <title>DOE Joint Genome Institute Lottia gigantea EST project.</title>
        <authorList>
            <person name="Richardson P."/>
            <person name="Lucas S."/>
            <person name="Rokhsar D."/>
            <person name="Wang M."/>
            <person name="Lindquist E.A."/>
        </authorList>
    </citation>
    <scope>NUCLEOTIDE SEQUENCE [LARGE SCALE MRNA]</scope>
    <scope>IDENTIFICATION</scope>
</reference>
<reference key="2">
    <citation type="journal article" date="2013" name="FEBS J.">
        <title>The shell-forming proteome of Lottia gigantea reveals both deep conservations and lineage-specific novelties.</title>
        <authorList>
            <person name="Marie B."/>
            <person name="Jackson D.J."/>
            <person name="Ramos-Silva P."/>
            <person name="Zanella-Cleon I."/>
            <person name="Guichard N."/>
            <person name="Marin F."/>
        </authorList>
    </citation>
    <scope>PROTEIN SEQUENCE OF 106-138 AND 161-191</scope>
    <scope>SUBCELLULAR LOCATION</scope>
    <scope>TISSUE SPECIFICITY</scope>
    <source>
        <tissue>Shell</tissue>
    </source>
</reference>
<proteinExistence type="evidence at protein level"/>
<feature type="signal peptide" evidence="1">
    <location>
        <begin position="1"/>
        <end position="21"/>
    </location>
</feature>
<feature type="chain" id="PRO_0000415255" description="EF-hand calcium-binding domain-containing protein 1" evidence="1">
    <location>
        <begin position="22"/>
        <end position="224"/>
    </location>
</feature>
<feature type="domain" description="EF-hand" evidence="2">
    <location>
        <begin position="115"/>
        <end position="150"/>
    </location>
</feature>
<feature type="binding site" evidence="2">
    <location>
        <position position="128"/>
    </location>
    <ligand>
        <name>Ca(2+)</name>
        <dbReference type="ChEBI" id="CHEBI:29108"/>
    </ligand>
</feature>
<feature type="binding site" evidence="2">
    <location>
        <position position="130"/>
    </location>
    <ligand>
        <name>Ca(2+)</name>
        <dbReference type="ChEBI" id="CHEBI:29108"/>
    </ligand>
</feature>
<feature type="binding site" evidence="2">
    <location>
        <position position="132"/>
    </location>
    <ligand>
        <name>Ca(2+)</name>
        <dbReference type="ChEBI" id="CHEBI:29108"/>
    </ligand>
</feature>
<feature type="binding site" evidence="2">
    <location>
        <position position="134"/>
    </location>
    <ligand>
        <name>Ca(2+)</name>
        <dbReference type="ChEBI" id="CHEBI:29108"/>
    </ligand>
</feature>
<feature type="binding site" evidence="2">
    <location>
        <position position="139"/>
    </location>
    <ligand>
        <name>Ca(2+)</name>
        <dbReference type="ChEBI" id="CHEBI:29108"/>
    </ligand>
</feature>
<protein>
    <recommendedName>
        <fullName>EF-hand calcium-binding domain-containing protein 1</fullName>
    </recommendedName>
</protein>
<name>EFCB1_LOTGI</name>
<dbReference type="EMBL" id="FC615346">
    <property type="status" value="NOT_ANNOTATED_CDS"/>
    <property type="molecule type" value="mRNA"/>
</dbReference>
<dbReference type="RefSeq" id="XP_009046539.1">
    <property type="nucleotide sequence ID" value="XM_009048291.1"/>
</dbReference>
<dbReference type="EnsemblMetazoa" id="LotgiT230492">
    <property type="protein sequence ID" value="LotgiP230492"/>
    <property type="gene ID" value="LotgiG230492"/>
</dbReference>
<dbReference type="GeneID" id="20248310"/>
<dbReference type="KEGG" id="lgi:LOTGIDRAFT_230492"/>
<dbReference type="CTD" id="20248310"/>
<dbReference type="HOGENOM" id="CLU_1236276_0_0_1"/>
<dbReference type="OMA" id="VDESHGW"/>
<dbReference type="OrthoDB" id="6138359at2759"/>
<dbReference type="GO" id="GO:0005576">
    <property type="term" value="C:extracellular region"/>
    <property type="evidence" value="ECO:0007669"/>
    <property type="project" value="UniProtKB-SubCell"/>
</dbReference>
<dbReference type="GO" id="GO:0005509">
    <property type="term" value="F:calcium ion binding"/>
    <property type="evidence" value="ECO:0007669"/>
    <property type="project" value="InterPro"/>
</dbReference>
<dbReference type="CDD" id="cd00051">
    <property type="entry name" value="EFh"/>
    <property type="match status" value="1"/>
</dbReference>
<dbReference type="Gene3D" id="1.10.238.10">
    <property type="entry name" value="EF-hand"/>
    <property type="match status" value="1"/>
</dbReference>
<dbReference type="InterPro" id="IPR011992">
    <property type="entry name" value="EF-hand-dom_pair"/>
</dbReference>
<dbReference type="InterPro" id="IPR018247">
    <property type="entry name" value="EF_Hand_1_Ca_BS"/>
</dbReference>
<dbReference type="InterPro" id="IPR002048">
    <property type="entry name" value="EF_hand_dom"/>
</dbReference>
<dbReference type="Pfam" id="PF13202">
    <property type="entry name" value="EF-hand_5"/>
    <property type="match status" value="2"/>
</dbReference>
<dbReference type="SUPFAM" id="SSF47473">
    <property type="entry name" value="EF-hand"/>
    <property type="match status" value="1"/>
</dbReference>
<dbReference type="PROSITE" id="PS00018">
    <property type="entry name" value="EF_HAND_1"/>
    <property type="match status" value="2"/>
</dbReference>
<dbReference type="PROSITE" id="PS50222">
    <property type="entry name" value="EF_HAND_2"/>
    <property type="match status" value="1"/>
</dbReference>